<keyword id="KW-0963">Cytoplasm</keyword>
<keyword id="KW-0378">Hydrolase</keyword>
<sequence>MIPGEIIAASGDIELNVGAPTVTLEVSNTGDRPVQVGSHYHFAETNGGLSFDRDKARGMRLDIPAGTAVRFEPGQTRSVTLIPLSGKREVYGFRQQVMGKL</sequence>
<feature type="chain" id="PRO_1000188909" description="Urease subunit beta">
    <location>
        <begin position="1"/>
        <end position="101"/>
    </location>
</feature>
<organism>
    <name type="scientific">Rhizobium rhizogenes (strain K84 / ATCC BAA-868)</name>
    <name type="common">Agrobacterium radiobacter</name>
    <dbReference type="NCBI Taxonomy" id="311403"/>
    <lineage>
        <taxon>Bacteria</taxon>
        <taxon>Pseudomonadati</taxon>
        <taxon>Pseudomonadota</taxon>
        <taxon>Alphaproteobacteria</taxon>
        <taxon>Hyphomicrobiales</taxon>
        <taxon>Rhizobiaceae</taxon>
        <taxon>Rhizobium/Agrobacterium group</taxon>
        <taxon>Rhizobium</taxon>
    </lineage>
</organism>
<evidence type="ECO:0000255" key="1">
    <source>
        <dbReference type="HAMAP-Rule" id="MF_01954"/>
    </source>
</evidence>
<protein>
    <recommendedName>
        <fullName evidence="1">Urease subunit beta</fullName>
        <ecNumber evidence="1">3.5.1.5</ecNumber>
    </recommendedName>
    <alternativeName>
        <fullName evidence="1">Urea amidohydrolase subunit beta</fullName>
    </alternativeName>
</protein>
<comment type="catalytic activity">
    <reaction evidence="1">
        <text>urea + 2 H2O + H(+) = hydrogencarbonate + 2 NH4(+)</text>
        <dbReference type="Rhea" id="RHEA:20557"/>
        <dbReference type="ChEBI" id="CHEBI:15377"/>
        <dbReference type="ChEBI" id="CHEBI:15378"/>
        <dbReference type="ChEBI" id="CHEBI:16199"/>
        <dbReference type="ChEBI" id="CHEBI:17544"/>
        <dbReference type="ChEBI" id="CHEBI:28938"/>
        <dbReference type="EC" id="3.5.1.5"/>
    </reaction>
</comment>
<comment type="pathway">
    <text evidence="1">Nitrogen metabolism; urea degradation; CO(2) and NH(3) from urea (urease route): step 1/1.</text>
</comment>
<comment type="subunit">
    <text evidence="1">Heterotrimer of UreA (gamma), UreB (beta) and UreC (alpha) subunits. Three heterotrimers associate to form the active enzyme.</text>
</comment>
<comment type="subcellular location">
    <subcellularLocation>
        <location evidence="1">Cytoplasm</location>
    </subcellularLocation>
</comment>
<comment type="similarity">
    <text evidence="1">Belongs to the urease beta subunit family.</text>
</comment>
<name>URE2_RHIR8</name>
<reference key="1">
    <citation type="journal article" date="2009" name="J. Bacteriol.">
        <title>Genome sequences of three Agrobacterium biovars help elucidate the evolution of multichromosome genomes in bacteria.</title>
        <authorList>
            <person name="Slater S.C."/>
            <person name="Goldman B.S."/>
            <person name="Goodner B."/>
            <person name="Setubal J.C."/>
            <person name="Farrand S.K."/>
            <person name="Nester E.W."/>
            <person name="Burr T.J."/>
            <person name="Banta L."/>
            <person name="Dickerman A.W."/>
            <person name="Paulsen I."/>
            <person name="Otten L."/>
            <person name="Suen G."/>
            <person name="Welch R."/>
            <person name="Almeida N.F."/>
            <person name="Arnold F."/>
            <person name="Burton O.T."/>
            <person name="Du Z."/>
            <person name="Ewing A."/>
            <person name="Godsy E."/>
            <person name="Heisel S."/>
            <person name="Houmiel K.L."/>
            <person name="Jhaveri J."/>
            <person name="Lu J."/>
            <person name="Miller N.M."/>
            <person name="Norton S."/>
            <person name="Chen Q."/>
            <person name="Phoolcharoen W."/>
            <person name="Ohlin V."/>
            <person name="Ondrusek D."/>
            <person name="Pride N."/>
            <person name="Stricklin S.L."/>
            <person name="Sun J."/>
            <person name="Wheeler C."/>
            <person name="Wilson L."/>
            <person name="Zhu H."/>
            <person name="Wood D.W."/>
        </authorList>
    </citation>
    <scope>NUCLEOTIDE SEQUENCE [LARGE SCALE GENOMIC DNA]</scope>
    <source>
        <strain>K84 / ATCC BAA-868</strain>
    </source>
</reference>
<gene>
    <name evidence="1" type="primary">ureB</name>
    <name type="ordered locus">Arad_3470</name>
</gene>
<dbReference type="EC" id="3.5.1.5" evidence="1"/>
<dbReference type="EMBL" id="CP000628">
    <property type="protein sequence ID" value="ACM27413.1"/>
    <property type="molecule type" value="Genomic_DNA"/>
</dbReference>
<dbReference type="RefSeq" id="WP_007689919.1">
    <property type="nucleotide sequence ID" value="NC_011985.1"/>
</dbReference>
<dbReference type="SMR" id="B9J8M5"/>
<dbReference type="STRING" id="311403.Arad_3470"/>
<dbReference type="KEGG" id="ara:Arad_3470"/>
<dbReference type="eggNOG" id="COG0832">
    <property type="taxonomic scope" value="Bacteria"/>
</dbReference>
<dbReference type="HOGENOM" id="CLU_129707_1_1_5"/>
<dbReference type="UniPathway" id="UPA00258">
    <property type="reaction ID" value="UER00370"/>
</dbReference>
<dbReference type="Proteomes" id="UP000001600">
    <property type="component" value="Chromosome 1"/>
</dbReference>
<dbReference type="GO" id="GO:0035550">
    <property type="term" value="C:urease complex"/>
    <property type="evidence" value="ECO:0007669"/>
    <property type="project" value="InterPro"/>
</dbReference>
<dbReference type="GO" id="GO:0009039">
    <property type="term" value="F:urease activity"/>
    <property type="evidence" value="ECO:0007669"/>
    <property type="project" value="UniProtKB-UniRule"/>
</dbReference>
<dbReference type="GO" id="GO:0043419">
    <property type="term" value="P:urea catabolic process"/>
    <property type="evidence" value="ECO:0007669"/>
    <property type="project" value="UniProtKB-UniRule"/>
</dbReference>
<dbReference type="CDD" id="cd00407">
    <property type="entry name" value="Urease_beta"/>
    <property type="match status" value="1"/>
</dbReference>
<dbReference type="FunFam" id="2.10.150.10:FF:000001">
    <property type="entry name" value="Urease subunit beta"/>
    <property type="match status" value="1"/>
</dbReference>
<dbReference type="Gene3D" id="2.10.150.10">
    <property type="entry name" value="Urease, beta subunit"/>
    <property type="match status" value="1"/>
</dbReference>
<dbReference type="HAMAP" id="MF_01954">
    <property type="entry name" value="Urease_beta"/>
    <property type="match status" value="1"/>
</dbReference>
<dbReference type="InterPro" id="IPR002019">
    <property type="entry name" value="Urease_beta-like"/>
</dbReference>
<dbReference type="InterPro" id="IPR036461">
    <property type="entry name" value="Urease_betasu_sf"/>
</dbReference>
<dbReference type="InterPro" id="IPR050069">
    <property type="entry name" value="Urease_subunit"/>
</dbReference>
<dbReference type="NCBIfam" id="NF009682">
    <property type="entry name" value="PRK13203.1"/>
    <property type="match status" value="1"/>
</dbReference>
<dbReference type="NCBIfam" id="TIGR00192">
    <property type="entry name" value="urease_beta"/>
    <property type="match status" value="1"/>
</dbReference>
<dbReference type="PANTHER" id="PTHR33569">
    <property type="entry name" value="UREASE"/>
    <property type="match status" value="1"/>
</dbReference>
<dbReference type="PANTHER" id="PTHR33569:SF1">
    <property type="entry name" value="UREASE"/>
    <property type="match status" value="1"/>
</dbReference>
<dbReference type="Pfam" id="PF00699">
    <property type="entry name" value="Urease_beta"/>
    <property type="match status" value="1"/>
</dbReference>
<dbReference type="SUPFAM" id="SSF51278">
    <property type="entry name" value="Urease, beta-subunit"/>
    <property type="match status" value="1"/>
</dbReference>
<proteinExistence type="inferred from homology"/>
<accession>B9J8M5</accession>